<name>MOAA_BACVZ</name>
<keyword id="KW-0004">4Fe-4S</keyword>
<keyword id="KW-0342">GTP-binding</keyword>
<keyword id="KW-0408">Iron</keyword>
<keyword id="KW-0411">Iron-sulfur</keyword>
<keyword id="KW-0456">Lyase</keyword>
<keyword id="KW-0479">Metal-binding</keyword>
<keyword id="KW-0501">Molybdenum cofactor biosynthesis</keyword>
<keyword id="KW-0547">Nucleotide-binding</keyword>
<keyword id="KW-0949">S-adenosyl-L-methionine</keyword>
<feature type="chain" id="PRO_1000054172" description="GTP 3',8-cyclase">
    <location>
        <begin position="1"/>
        <end position="341"/>
    </location>
</feature>
<feature type="domain" description="Radical SAM core" evidence="2">
    <location>
        <begin position="11"/>
        <end position="231"/>
    </location>
</feature>
<feature type="binding site" evidence="1">
    <location>
        <position position="20"/>
    </location>
    <ligand>
        <name>GTP</name>
        <dbReference type="ChEBI" id="CHEBI:37565"/>
    </ligand>
</feature>
<feature type="binding site" evidence="1">
    <location>
        <position position="27"/>
    </location>
    <ligand>
        <name>[4Fe-4S] cluster</name>
        <dbReference type="ChEBI" id="CHEBI:49883"/>
        <label>1</label>
        <note>4Fe-4S-S-AdoMet</note>
    </ligand>
</feature>
<feature type="binding site" evidence="1">
    <location>
        <position position="31"/>
    </location>
    <ligand>
        <name>[4Fe-4S] cluster</name>
        <dbReference type="ChEBI" id="CHEBI:49883"/>
        <label>1</label>
        <note>4Fe-4S-S-AdoMet</note>
    </ligand>
</feature>
<feature type="binding site" evidence="1">
    <location>
        <position position="33"/>
    </location>
    <ligand>
        <name>S-adenosyl-L-methionine</name>
        <dbReference type="ChEBI" id="CHEBI:59789"/>
    </ligand>
</feature>
<feature type="binding site" evidence="1">
    <location>
        <position position="34"/>
    </location>
    <ligand>
        <name>[4Fe-4S] cluster</name>
        <dbReference type="ChEBI" id="CHEBI:49883"/>
        <label>1</label>
        <note>4Fe-4S-S-AdoMet</note>
    </ligand>
</feature>
<feature type="binding site" evidence="1">
    <location>
        <position position="75"/>
    </location>
    <ligand>
        <name>GTP</name>
        <dbReference type="ChEBI" id="CHEBI:37565"/>
    </ligand>
</feature>
<feature type="binding site" evidence="1">
    <location>
        <position position="79"/>
    </location>
    <ligand>
        <name>S-adenosyl-L-methionine</name>
        <dbReference type="ChEBI" id="CHEBI:59789"/>
    </ligand>
</feature>
<feature type="binding site" evidence="1">
    <location>
        <position position="106"/>
    </location>
    <ligand>
        <name>GTP</name>
        <dbReference type="ChEBI" id="CHEBI:37565"/>
    </ligand>
</feature>
<feature type="binding site" evidence="1">
    <location>
        <position position="130"/>
    </location>
    <ligand>
        <name>S-adenosyl-L-methionine</name>
        <dbReference type="ChEBI" id="CHEBI:59789"/>
    </ligand>
</feature>
<feature type="binding site" evidence="1">
    <location>
        <position position="167"/>
    </location>
    <ligand>
        <name>GTP</name>
        <dbReference type="ChEBI" id="CHEBI:37565"/>
    </ligand>
</feature>
<feature type="binding site" evidence="1">
    <location>
        <position position="201"/>
    </location>
    <ligand>
        <name>S-adenosyl-L-methionine</name>
        <dbReference type="ChEBI" id="CHEBI:59789"/>
    </ligand>
</feature>
<feature type="binding site" evidence="1">
    <location>
        <position position="265"/>
    </location>
    <ligand>
        <name>[4Fe-4S] cluster</name>
        <dbReference type="ChEBI" id="CHEBI:49883"/>
        <label>2</label>
        <note>4Fe-4S-substrate</note>
    </ligand>
</feature>
<feature type="binding site" evidence="1">
    <location>
        <position position="268"/>
    </location>
    <ligand>
        <name>[4Fe-4S] cluster</name>
        <dbReference type="ChEBI" id="CHEBI:49883"/>
        <label>2</label>
        <note>4Fe-4S-substrate</note>
    </ligand>
</feature>
<feature type="binding site" evidence="1">
    <location>
        <begin position="270"/>
        <end position="272"/>
    </location>
    <ligand>
        <name>GTP</name>
        <dbReference type="ChEBI" id="CHEBI:37565"/>
    </ligand>
</feature>
<feature type="binding site" evidence="1">
    <location>
        <position position="282"/>
    </location>
    <ligand>
        <name>[4Fe-4S] cluster</name>
        <dbReference type="ChEBI" id="CHEBI:49883"/>
        <label>2</label>
        <note>4Fe-4S-substrate</note>
    </ligand>
</feature>
<dbReference type="EC" id="4.1.99.22" evidence="1"/>
<dbReference type="EMBL" id="CP000560">
    <property type="protein sequence ID" value="ABS75716.1"/>
    <property type="molecule type" value="Genomic_DNA"/>
</dbReference>
<dbReference type="RefSeq" id="WP_012118655.1">
    <property type="nucleotide sequence ID" value="NC_009725.2"/>
</dbReference>
<dbReference type="SMR" id="A7Z9P0"/>
<dbReference type="GeneID" id="93082531"/>
<dbReference type="KEGG" id="bay:RBAM_033870"/>
<dbReference type="HOGENOM" id="CLU_009273_0_1_9"/>
<dbReference type="UniPathway" id="UPA00344"/>
<dbReference type="Proteomes" id="UP000001120">
    <property type="component" value="Chromosome"/>
</dbReference>
<dbReference type="GO" id="GO:0051539">
    <property type="term" value="F:4 iron, 4 sulfur cluster binding"/>
    <property type="evidence" value="ECO:0007669"/>
    <property type="project" value="UniProtKB-UniRule"/>
</dbReference>
<dbReference type="GO" id="GO:0061799">
    <property type="term" value="F:cyclic pyranopterin monophosphate synthase activity"/>
    <property type="evidence" value="ECO:0007669"/>
    <property type="project" value="TreeGrafter"/>
</dbReference>
<dbReference type="GO" id="GO:0061798">
    <property type="term" value="F:GTP 3',8'-cyclase activity"/>
    <property type="evidence" value="ECO:0007669"/>
    <property type="project" value="UniProtKB-UniRule"/>
</dbReference>
<dbReference type="GO" id="GO:0005525">
    <property type="term" value="F:GTP binding"/>
    <property type="evidence" value="ECO:0007669"/>
    <property type="project" value="UniProtKB-UniRule"/>
</dbReference>
<dbReference type="GO" id="GO:0046872">
    <property type="term" value="F:metal ion binding"/>
    <property type="evidence" value="ECO:0007669"/>
    <property type="project" value="UniProtKB-KW"/>
</dbReference>
<dbReference type="GO" id="GO:1904047">
    <property type="term" value="F:S-adenosyl-L-methionine binding"/>
    <property type="evidence" value="ECO:0007669"/>
    <property type="project" value="UniProtKB-UniRule"/>
</dbReference>
<dbReference type="GO" id="GO:0006777">
    <property type="term" value="P:Mo-molybdopterin cofactor biosynthetic process"/>
    <property type="evidence" value="ECO:0007669"/>
    <property type="project" value="UniProtKB-UniRule"/>
</dbReference>
<dbReference type="CDD" id="cd01335">
    <property type="entry name" value="Radical_SAM"/>
    <property type="match status" value="1"/>
</dbReference>
<dbReference type="CDD" id="cd21117">
    <property type="entry name" value="Twitch_MoaA"/>
    <property type="match status" value="1"/>
</dbReference>
<dbReference type="Gene3D" id="3.20.20.70">
    <property type="entry name" value="Aldolase class I"/>
    <property type="match status" value="1"/>
</dbReference>
<dbReference type="HAMAP" id="MF_01225_B">
    <property type="entry name" value="MoaA_B"/>
    <property type="match status" value="1"/>
</dbReference>
<dbReference type="InterPro" id="IPR013785">
    <property type="entry name" value="Aldolase_TIM"/>
</dbReference>
<dbReference type="InterPro" id="IPR006638">
    <property type="entry name" value="Elp3/MiaA/NifB-like_rSAM"/>
</dbReference>
<dbReference type="InterPro" id="IPR013483">
    <property type="entry name" value="MoaA"/>
</dbReference>
<dbReference type="InterPro" id="IPR000385">
    <property type="entry name" value="MoaA_NifB_PqqE_Fe-S-bd_CS"/>
</dbReference>
<dbReference type="InterPro" id="IPR010505">
    <property type="entry name" value="MoaA_twitch"/>
</dbReference>
<dbReference type="InterPro" id="IPR050105">
    <property type="entry name" value="MoCo_biosynth_MoaA/MoaC"/>
</dbReference>
<dbReference type="InterPro" id="IPR007197">
    <property type="entry name" value="rSAM"/>
</dbReference>
<dbReference type="NCBIfam" id="TIGR02666">
    <property type="entry name" value="moaA"/>
    <property type="match status" value="1"/>
</dbReference>
<dbReference type="PANTHER" id="PTHR22960:SF0">
    <property type="entry name" value="MOLYBDENUM COFACTOR BIOSYNTHESIS PROTEIN 1"/>
    <property type="match status" value="1"/>
</dbReference>
<dbReference type="PANTHER" id="PTHR22960">
    <property type="entry name" value="MOLYBDOPTERIN COFACTOR SYNTHESIS PROTEIN A"/>
    <property type="match status" value="1"/>
</dbReference>
<dbReference type="Pfam" id="PF06463">
    <property type="entry name" value="Mob_synth_C"/>
    <property type="match status" value="1"/>
</dbReference>
<dbReference type="Pfam" id="PF04055">
    <property type="entry name" value="Radical_SAM"/>
    <property type="match status" value="1"/>
</dbReference>
<dbReference type="SFLD" id="SFLDG01383">
    <property type="entry name" value="cyclic_pyranopterin_phosphate"/>
    <property type="match status" value="1"/>
</dbReference>
<dbReference type="SFLD" id="SFLDG01072">
    <property type="entry name" value="dehydrogenase_like"/>
    <property type="match status" value="1"/>
</dbReference>
<dbReference type="SMART" id="SM00729">
    <property type="entry name" value="Elp3"/>
    <property type="match status" value="1"/>
</dbReference>
<dbReference type="SUPFAM" id="SSF102114">
    <property type="entry name" value="Radical SAM enzymes"/>
    <property type="match status" value="1"/>
</dbReference>
<dbReference type="PROSITE" id="PS01305">
    <property type="entry name" value="MOAA_NIFB_PQQE"/>
    <property type="match status" value="1"/>
</dbReference>
<dbReference type="PROSITE" id="PS51918">
    <property type="entry name" value="RADICAL_SAM"/>
    <property type="match status" value="1"/>
</dbReference>
<accession>A7Z9P0</accession>
<sequence>MNTETRRVTDKRERPLRDLRISVTDRCNFRCTYCMPAELFGPDYPFLQKTELLSFEELERLAKLFVGRFGVEKIRLTGGEPLMRKDMPELIKKLARIPGLKDIAMTTNGSLLPVYAEKLKQAGLHRVTVSLDSLEDERFKAINGRGVSVNKVLEGIEAAKAAGLGVKINMVVQKGVNEKDILPMARYFKEKGHILRFIEFMDVGNTNQWNKKDVITKAEIIDLINQHMPTEPIEANYKGEVASRFRYLDGSGEIGVISSVSDAFCASCNRARLSARGELFTCLFASSGYDVRKLVRGGLTDDELTESIASVWRNRTDQYSIDRALSKTDGKKKVEMSYIGG</sequence>
<evidence type="ECO:0000255" key="1">
    <source>
        <dbReference type="HAMAP-Rule" id="MF_01225"/>
    </source>
</evidence>
<evidence type="ECO:0000255" key="2">
    <source>
        <dbReference type="PROSITE-ProRule" id="PRU01266"/>
    </source>
</evidence>
<proteinExistence type="inferred from homology"/>
<comment type="function">
    <text evidence="1">Catalyzes the cyclization of GTP to (8S)-3',8-cyclo-7,8-dihydroguanosine 5'-triphosphate.</text>
</comment>
<comment type="catalytic activity">
    <reaction evidence="1">
        <text>GTP + AH2 + S-adenosyl-L-methionine = (8S)-3',8-cyclo-7,8-dihydroguanosine 5'-triphosphate + 5'-deoxyadenosine + L-methionine + A + H(+)</text>
        <dbReference type="Rhea" id="RHEA:49576"/>
        <dbReference type="ChEBI" id="CHEBI:13193"/>
        <dbReference type="ChEBI" id="CHEBI:15378"/>
        <dbReference type="ChEBI" id="CHEBI:17319"/>
        <dbReference type="ChEBI" id="CHEBI:17499"/>
        <dbReference type="ChEBI" id="CHEBI:37565"/>
        <dbReference type="ChEBI" id="CHEBI:57844"/>
        <dbReference type="ChEBI" id="CHEBI:59789"/>
        <dbReference type="ChEBI" id="CHEBI:131766"/>
        <dbReference type="EC" id="4.1.99.22"/>
    </reaction>
</comment>
<comment type="cofactor">
    <cofactor evidence="1">
        <name>[4Fe-4S] cluster</name>
        <dbReference type="ChEBI" id="CHEBI:49883"/>
    </cofactor>
    <text evidence="1">Binds 2 [4Fe-4S] clusters. Binds 1 [4Fe-4S] cluster coordinated with 3 cysteines and an exchangeable S-adenosyl-L-methionine and 1 [4Fe-4S] cluster coordinated with 3 cysteines and the GTP-derived substrate.</text>
</comment>
<comment type="pathway">
    <text evidence="1">Cofactor biosynthesis; molybdopterin biosynthesis.</text>
</comment>
<comment type="subunit">
    <text evidence="1">Monomer and homodimer.</text>
</comment>
<comment type="similarity">
    <text evidence="1">Belongs to the radical SAM superfamily. MoaA family.</text>
</comment>
<reference key="1">
    <citation type="journal article" date="2007" name="Nat. Biotechnol.">
        <title>Comparative analysis of the complete genome sequence of the plant growth-promoting bacterium Bacillus amyloliquefaciens FZB42.</title>
        <authorList>
            <person name="Chen X.H."/>
            <person name="Koumoutsi A."/>
            <person name="Scholz R."/>
            <person name="Eisenreich A."/>
            <person name="Schneider K."/>
            <person name="Heinemeyer I."/>
            <person name="Morgenstern B."/>
            <person name="Voss B."/>
            <person name="Hess W.R."/>
            <person name="Reva O."/>
            <person name="Junge H."/>
            <person name="Voigt B."/>
            <person name="Jungblut P.R."/>
            <person name="Vater J."/>
            <person name="Suessmuth R."/>
            <person name="Liesegang H."/>
            <person name="Strittmatter A."/>
            <person name="Gottschalk G."/>
            <person name="Borriss R."/>
        </authorList>
    </citation>
    <scope>NUCLEOTIDE SEQUENCE [LARGE SCALE GENOMIC DNA]</scope>
    <source>
        <strain>DSM 23117 / BGSC 10A6 / LMG 26770 / FZB42</strain>
    </source>
</reference>
<organism>
    <name type="scientific">Bacillus velezensis (strain DSM 23117 / BGSC 10A6 / LMG 26770 / FZB42)</name>
    <name type="common">Bacillus amyloliquefaciens subsp. plantarum</name>
    <dbReference type="NCBI Taxonomy" id="326423"/>
    <lineage>
        <taxon>Bacteria</taxon>
        <taxon>Bacillati</taxon>
        <taxon>Bacillota</taxon>
        <taxon>Bacilli</taxon>
        <taxon>Bacillales</taxon>
        <taxon>Bacillaceae</taxon>
        <taxon>Bacillus</taxon>
        <taxon>Bacillus amyloliquefaciens group</taxon>
    </lineage>
</organism>
<gene>
    <name evidence="1" type="primary">moaA</name>
    <name type="ordered locus">RBAM_033870</name>
</gene>
<protein>
    <recommendedName>
        <fullName evidence="1">GTP 3',8-cyclase</fullName>
        <ecNumber evidence="1">4.1.99.22</ecNumber>
    </recommendedName>
    <alternativeName>
        <fullName evidence="1">Molybdenum cofactor biosynthesis protein A</fullName>
    </alternativeName>
</protein>